<accession>Q21734</accession>
<accession>Q58A96</accession>
<accession>Q7YSN4</accession>
<accession>Q93972</accession>
<accession>Q93973</accession>
<reference key="1">
    <citation type="journal article" date="1998" name="Science">
        <title>Genome sequence of the nematode C. elegans: a platform for investigating biology.</title>
        <authorList>
            <consortium name="The C. elegans sequencing consortium"/>
        </authorList>
    </citation>
    <scope>NUCLEOTIDE SEQUENCE [LARGE SCALE GENOMIC DNA]</scope>
    <source>
        <strain>Bristol N2</strain>
    </source>
</reference>
<reference key="2">
    <citation type="journal article" date="2012" name="Biochim. Biophys. Acta">
        <title>The Ras-ERK MAPK regulatory network controls dedifferentiation in Caenorhabditis elegans germline.</title>
        <authorList>
            <person name="Cha D.S."/>
            <person name="Datla U.S."/>
            <person name="Hollis S.E."/>
            <person name="Kimble J."/>
            <person name="Lee M.H."/>
        </authorList>
    </citation>
    <scope>FUNCTION</scope>
    <scope>DISRUPTION PHENOTYPE</scope>
</reference>
<proteinExistence type="inferred from homology"/>
<sequence length="784" mass="88120">MGLQRGMPLAQLGEPFGITPSSIENVSPGIDQCKDHRMDVSMRSDPTDCSSDTTNTFHSSIHIIQPPPNNGFRLMNWKTDSSSETEIDIGDVRKCGEKADPRQFELLKVLGQGSFGKVFLVRKVRGRDSGHVYAMKVLKKATLKVRDRQRTKLERNILAHISHPFIVKLHYAFQTEGKLYLILDFLRGGDLFTRLSKEVMFTEDDVKFYLAELTLALEHLHSLGIVYRDLKPENILLDADGHIKVTDFGLSKEAIDSEKKTYSFCGTVEYMAPEVINRRGHSMAADFWSLGVLMFEMLTGHLPFQGRDRNDTMTQILKAKLSMPHFLTQEAQSLLRALFKRNSQNRLGAGPDGVEEIKRHAFFAKIDFVKLLNKEIDPPFKPALSTVDSTSYFDPEFTKRTPKDSPALPASANGHEIFRGFSFVSNAVMEERKLIAKSVRSVPTAKTNPFTDDYEILEKIGNGAHSVVHKCQMKATRRKYAVKIVKKAVFDATEEVDILLRHSHHQFVVKLFDVYEDETAIYMIEELCEGGELLDKLVNKKSLGSEKEVAAIMANLLNAVQYLHSQQVAHRDLTAANILFALKDGDPSSLRIVDFGFAKQSRAENGMLMTPCYTAQFVAPEVLRKQGYDRSCDVWSLGVLLHTMLTGCTPFAMGPNDTPDQILQRVGDGKISMTHPVWDTISDEAKDLVRKMLDVDPNRRVTAKQALQHKWIGQKEALPDRPIQSEQVGELDMQNVKVALEQTYKAIASAPSVQLRPVGSSALAKRRMKEILYANYTKNVSANA</sequence>
<feature type="chain" id="PRO_0000086213" description="Putative ribosomal protein S6 kinase alpha-1">
    <location>
        <begin position="1"/>
        <end position="784"/>
    </location>
</feature>
<feature type="domain" description="Protein kinase 1" evidence="3">
    <location>
        <begin position="104"/>
        <end position="363"/>
    </location>
</feature>
<feature type="domain" description="AGC-kinase C-terminal" evidence="4">
    <location>
        <begin position="364"/>
        <end position="433"/>
    </location>
</feature>
<feature type="domain" description="Protein kinase 2" evidence="3">
    <location>
        <begin position="454"/>
        <end position="712"/>
    </location>
</feature>
<feature type="active site" description="Proton acceptor" evidence="1">
    <location>
        <position position="229"/>
    </location>
</feature>
<feature type="active site" description="Proton acceptor" evidence="1">
    <location>
        <position position="572"/>
    </location>
</feature>
<feature type="binding site" evidence="3">
    <location>
        <begin position="110"/>
        <end position="118"/>
    </location>
    <ligand>
        <name>ATP</name>
        <dbReference type="ChEBI" id="CHEBI:30616"/>
    </ligand>
</feature>
<feature type="binding site" evidence="3">
    <location>
        <position position="136"/>
    </location>
    <ligand>
        <name>ATP</name>
        <dbReference type="ChEBI" id="CHEBI:30616"/>
    </ligand>
</feature>
<feature type="binding site" evidence="3">
    <location>
        <begin position="460"/>
        <end position="468"/>
    </location>
    <ligand>
        <name>ATP</name>
        <dbReference type="ChEBI" id="CHEBI:30616"/>
    </ligand>
</feature>
<feature type="binding site" evidence="3">
    <location>
        <position position="483"/>
    </location>
    <ligand>
        <name>ATP</name>
        <dbReference type="ChEBI" id="CHEBI:30616"/>
    </ligand>
</feature>
<feature type="modified residue" description="Phosphoserine" evidence="1">
    <location>
        <position position="263"/>
    </location>
</feature>
<feature type="modified residue" description="Phosphothreonine" evidence="1">
    <location>
        <position position="401"/>
    </location>
</feature>
<feature type="modified residue" description="Phosphoserine" evidence="1">
    <location>
        <position position="405"/>
    </location>
</feature>
<feature type="modified residue" description="Phosphoserine; by autocatalysis" evidence="1">
    <location>
        <position position="422"/>
    </location>
</feature>
<feature type="modified residue" description="Phosphothreonine" evidence="1">
    <location>
        <position position="610"/>
    </location>
</feature>
<feature type="splice variant" id="VSP_004796" description="In isoform b." evidence="6">
    <location>
        <begin position="1"/>
        <end position="57"/>
    </location>
</feature>
<feature type="splice variant" id="VSP_020793" description="In isoform d." evidence="6">
    <original>GLQRGMPLAQLGEPFGITPSSIENVSPGIDQCKDHRMD</original>
    <variation>TFDFELPFRNFLESRKINT</variation>
    <location>
        <begin position="2"/>
        <end position="39"/>
    </location>
</feature>
<feature type="splice variant" id="VSP_009636" description="In isoform c." evidence="6">
    <location>
        <begin position="40"/>
        <end position="78"/>
    </location>
</feature>
<feature type="splice variant" id="VSP_004797" description="In isoform b." evidence="6">
    <original>HSSIHIIQPPPNNGFRLMNW</original>
    <variation>MLILAEVEEFAENEIEQGEE</variation>
    <location>
        <begin position="58"/>
        <end position="77"/>
    </location>
</feature>
<feature type="splice variant" id="VSP_020794" description="In isoform d." evidence="6">
    <original>VRKMLDVDPNRRVTAKQALQHKWIGQKEALPDRPIQSEQVGELDMQNVKVALEQTYKAIASAPSV</original>
    <variation>QNKHCNISGSDKRKHFRIGQFNQNKLESLICKMSRLHLSRHIKQSHRLQVFNFVQLDRLHLRNDE</variation>
    <location>
        <begin position="689"/>
        <end position="753"/>
    </location>
</feature>
<feature type="splice variant" id="VSP_020795" description="In isoform d." evidence="6">
    <location>
        <begin position="754"/>
        <end position="784"/>
    </location>
</feature>
<keyword id="KW-0025">Alternative splicing</keyword>
<keyword id="KW-0067">ATP-binding</keyword>
<keyword id="KW-0418">Kinase</keyword>
<keyword id="KW-0547">Nucleotide-binding</keyword>
<keyword id="KW-0597">Phosphoprotein</keyword>
<keyword id="KW-1185">Reference proteome</keyword>
<keyword id="KW-0677">Repeat</keyword>
<keyword id="KW-0723">Serine/threonine-protein kinase</keyword>
<keyword id="KW-0808">Transferase</keyword>
<protein>
    <recommendedName>
        <fullName>Putative ribosomal protein S6 kinase alpha-1</fullName>
        <ecNumber>2.7.11.1</ecNumber>
    </recommendedName>
</protein>
<organism>
    <name type="scientific">Caenorhabditis elegans</name>
    <dbReference type="NCBI Taxonomy" id="6239"/>
    <lineage>
        <taxon>Eukaryota</taxon>
        <taxon>Metazoa</taxon>
        <taxon>Ecdysozoa</taxon>
        <taxon>Nematoda</taxon>
        <taxon>Chromadorea</taxon>
        <taxon>Rhabditida</taxon>
        <taxon>Rhabditina</taxon>
        <taxon>Rhabditomorpha</taxon>
        <taxon>Rhabditoidea</taxon>
        <taxon>Rhabditidae</taxon>
        <taxon>Peloderinae</taxon>
        <taxon>Caenorhabditis</taxon>
    </lineage>
</organism>
<name>KS6A1_CAEEL</name>
<evidence type="ECO:0000250" key="1"/>
<evidence type="ECO:0000250" key="2">
    <source>
        <dbReference type="UniProtKB" id="Q15418"/>
    </source>
</evidence>
<evidence type="ECO:0000255" key="3">
    <source>
        <dbReference type="PROSITE-ProRule" id="PRU00159"/>
    </source>
</evidence>
<evidence type="ECO:0000255" key="4">
    <source>
        <dbReference type="PROSITE-ProRule" id="PRU00618"/>
    </source>
</evidence>
<evidence type="ECO:0000269" key="5">
    <source>
    </source>
</evidence>
<evidence type="ECO:0000305" key="6"/>
<comment type="function">
    <text evidence="2 5">Serine/threonine kinase that may play a role in mediating the growth-factor and stress induced activation of transcription (By similarity). Suppresses germline tumor formation by preventing the dedifferentiation of secondary spermatocytes probably downstream of mpk-1 (PubMed:22820175).</text>
</comment>
<comment type="catalytic activity">
    <reaction>
        <text>L-seryl-[protein] + ATP = O-phospho-L-seryl-[protein] + ADP + H(+)</text>
        <dbReference type="Rhea" id="RHEA:17989"/>
        <dbReference type="Rhea" id="RHEA-COMP:9863"/>
        <dbReference type="Rhea" id="RHEA-COMP:11604"/>
        <dbReference type="ChEBI" id="CHEBI:15378"/>
        <dbReference type="ChEBI" id="CHEBI:29999"/>
        <dbReference type="ChEBI" id="CHEBI:30616"/>
        <dbReference type="ChEBI" id="CHEBI:83421"/>
        <dbReference type="ChEBI" id="CHEBI:456216"/>
        <dbReference type="EC" id="2.7.11.1"/>
    </reaction>
</comment>
<comment type="catalytic activity">
    <reaction>
        <text>L-threonyl-[protein] + ATP = O-phospho-L-threonyl-[protein] + ADP + H(+)</text>
        <dbReference type="Rhea" id="RHEA:46608"/>
        <dbReference type="Rhea" id="RHEA-COMP:11060"/>
        <dbReference type="Rhea" id="RHEA-COMP:11605"/>
        <dbReference type="ChEBI" id="CHEBI:15378"/>
        <dbReference type="ChEBI" id="CHEBI:30013"/>
        <dbReference type="ChEBI" id="CHEBI:30616"/>
        <dbReference type="ChEBI" id="CHEBI:61977"/>
        <dbReference type="ChEBI" id="CHEBI:456216"/>
        <dbReference type="EC" id="2.7.11.1"/>
    </reaction>
</comment>
<comment type="cofactor">
    <cofactor evidence="1">
        <name>Mg(2+)</name>
        <dbReference type="ChEBI" id="CHEBI:18420"/>
    </cofactor>
</comment>
<comment type="activity regulation">
    <text evidence="1">Activated by multiple phosphorylations on threonine and serine residues.</text>
</comment>
<comment type="alternative products">
    <event type="alternative splicing"/>
    <isoform>
        <id>Q21734-1</id>
        <name>a</name>
        <sequence type="displayed"/>
    </isoform>
    <isoform>
        <id>Q21734-2</id>
        <name>b</name>
        <sequence type="described" ref="VSP_004796 VSP_004797"/>
    </isoform>
    <isoform>
        <id>Q21734-3</id>
        <name>c</name>
        <sequence type="described" ref="VSP_009636"/>
    </isoform>
    <isoform>
        <id>Q21734-4</id>
        <name>d</name>
        <sequence type="described" ref="VSP_020793 VSP_020794 VSP_020795"/>
    </isoform>
</comment>
<comment type="PTM">
    <text evidence="1">Autophosphorylated on Ser-422, as part of the activation process.</text>
</comment>
<comment type="disruption phenotype">
    <text evidence="5">RNAi-mediated knockdown in lip-1 and puf-8 double mutant causes a decrease in number of germline tumors and restores normal microtubule organization in spermatocytes.</text>
</comment>
<comment type="similarity">
    <text evidence="6">Belongs to the protein kinase superfamily. AGC Ser/Thr protein kinase family. S6 kinase subfamily.</text>
</comment>
<gene>
    <name type="primary">rskn-1</name>
    <name type="ORF">T01H8.1</name>
</gene>
<dbReference type="EC" id="2.7.11.1"/>
<dbReference type="EMBL" id="Z80219">
    <property type="protein sequence ID" value="CAB02301.2"/>
    <property type="molecule type" value="Genomic_DNA"/>
</dbReference>
<dbReference type="EMBL" id="Z80219">
    <property type="protein sequence ID" value="CAB02302.2"/>
    <property type="molecule type" value="Genomic_DNA"/>
</dbReference>
<dbReference type="EMBL" id="Z75546">
    <property type="protein sequence ID" value="CAB02302.2"/>
    <property type="status" value="JOINED"/>
    <property type="molecule type" value="Genomic_DNA"/>
</dbReference>
<dbReference type="EMBL" id="Z80219">
    <property type="protein sequence ID" value="CAE17938.1"/>
    <property type="molecule type" value="Genomic_DNA"/>
</dbReference>
<dbReference type="EMBL" id="Z75546">
    <property type="protein sequence ID" value="CAE17938.1"/>
    <property type="status" value="JOINED"/>
    <property type="molecule type" value="Genomic_DNA"/>
</dbReference>
<dbReference type="EMBL" id="Z80219">
    <property type="protein sequence ID" value="CAI70409.1"/>
    <property type="molecule type" value="Genomic_DNA"/>
</dbReference>
<dbReference type="EMBL" id="Z75546">
    <property type="protein sequence ID" value="CAI70409.1"/>
    <property type="status" value="JOINED"/>
    <property type="molecule type" value="Genomic_DNA"/>
</dbReference>
<dbReference type="PIR" id="T23927">
    <property type="entry name" value="T23927"/>
</dbReference>
<dbReference type="PIR" id="T24340">
    <property type="entry name" value="T24340"/>
</dbReference>
<dbReference type="RefSeq" id="NP_001021602.1">
    <molecule id="Q21734-3"/>
    <property type="nucleotide sequence ID" value="NM_001026431.3"/>
</dbReference>
<dbReference type="RefSeq" id="NP_001021603.1">
    <molecule id="Q21734-4"/>
    <property type="nucleotide sequence ID" value="NM_001026432.5"/>
</dbReference>
<dbReference type="RefSeq" id="NP_001379180.1">
    <molecule id="Q21734-2"/>
    <property type="nucleotide sequence ID" value="NM_001392686.1"/>
</dbReference>
<dbReference type="RefSeq" id="NP_492319.2">
    <molecule id="Q21734-1"/>
    <property type="nucleotide sequence ID" value="NM_059918.4"/>
</dbReference>
<dbReference type="RefSeq" id="NP_492320.2">
    <property type="nucleotide sequence ID" value="NM_059919.3"/>
</dbReference>
<dbReference type="SMR" id="Q21734"/>
<dbReference type="BioGRID" id="38080">
    <property type="interactions" value="2"/>
</dbReference>
<dbReference type="FunCoup" id="Q21734">
    <property type="interactions" value="2175"/>
</dbReference>
<dbReference type="IntAct" id="Q21734">
    <property type="interactions" value="1"/>
</dbReference>
<dbReference type="STRING" id="6239.T01H8.1e.1"/>
<dbReference type="PaxDb" id="6239-T01H8.1e"/>
<dbReference type="PeptideAtlas" id="Q21734"/>
<dbReference type="EnsemblMetazoa" id="T01H8.1a.1">
    <molecule id="Q21734-1"/>
    <property type="protein sequence ID" value="T01H8.1a.1"/>
    <property type="gene ID" value="WBGene00011352"/>
</dbReference>
<dbReference type="EnsemblMetazoa" id="T01H8.1b.1">
    <molecule id="Q21734-2"/>
    <property type="protein sequence ID" value="T01H8.1b.1"/>
    <property type="gene ID" value="WBGene00011352"/>
</dbReference>
<dbReference type="EnsemblMetazoa" id="T01H8.1c.1">
    <molecule id="Q21734-3"/>
    <property type="protein sequence ID" value="T01H8.1c.1"/>
    <property type="gene ID" value="WBGene00011352"/>
</dbReference>
<dbReference type="EnsemblMetazoa" id="T01H8.1d.1">
    <molecule id="Q21734-4"/>
    <property type="protein sequence ID" value="T01H8.1d.1"/>
    <property type="gene ID" value="WBGene00011352"/>
</dbReference>
<dbReference type="GeneID" id="172647"/>
<dbReference type="KEGG" id="cel:CELE_T01H8.1"/>
<dbReference type="UCSC" id="T01H8.1d.2">
    <molecule id="Q21734-1"/>
    <property type="organism name" value="c. elegans"/>
</dbReference>
<dbReference type="AGR" id="WB:WBGene00011352"/>
<dbReference type="CTD" id="172647"/>
<dbReference type="WormBase" id="T01H8.1a">
    <molecule id="Q21734-1"/>
    <property type="protein sequence ID" value="CE34493"/>
    <property type="gene ID" value="WBGene00011352"/>
    <property type="gene designation" value="rskn-1"/>
</dbReference>
<dbReference type="WormBase" id="T01H8.1b">
    <molecule id="Q21734-2"/>
    <property type="protein sequence ID" value="CE34494"/>
    <property type="gene ID" value="WBGene00011352"/>
    <property type="gene designation" value="rskn-1"/>
</dbReference>
<dbReference type="WormBase" id="T01H8.1c">
    <molecule id="Q21734-3"/>
    <property type="protein sequence ID" value="CE34495"/>
    <property type="gene ID" value="WBGene00011352"/>
    <property type="gene designation" value="rskn-1"/>
</dbReference>
<dbReference type="WormBase" id="T01H8.1d">
    <molecule id="Q21734-4"/>
    <property type="protein sequence ID" value="CE38217"/>
    <property type="gene ID" value="WBGene00011352"/>
    <property type="gene designation" value="rskn-1"/>
</dbReference>
<dbReference type="eggNOG" id="KOG0603">
    <property type="taxonomic scope" value="Eukaryota"/>
</dbReference>
<dbReference type="GeneTree" id="ENSGT00940000169049"/>
<dbReference type="InParanoid" id="Q21734"/>
<dbReference type="OrthoDB" id="63267at2759"/>
<dbReference type="Reactome" id="R-CEL-198753">
    <property type="pathway name" value="ERK/MAPK targets"/>
</dbReference>
<dbReference type="Reactome" id="R-CEL-199920">
    <property type="pathway name" value="CREB phosphorylation"/>
</dbReference>
<dbReference type="Reactome" id="R-CEL-2559582">
    <property type="pathway name" value="Senescence-Associated Secretory Phenotype (SASP)"/>
</dbReference>
<dbReference type="Reactome" id="R-CEL-442742">
    <property type="pathway name" value="CREB1 phosphorylation through NMDA receptor-mediated activation of RAS signaling"/>
</dbReference>
<dbReference type="Reactome" id="R-CEL-444257">
    <property type="pathway name" value="RSK activation"/>
</dbReference>
<dbReference type="Reactome" id="R-CEL-881907">
    <property type="pathway name" value="Gastrin-CREB signalling pathway via PKC and MAPK"/>
</dbReference>
<dbReference type="Reactome" id="R-CEL-9856649">
    <property type="pathway name" value="Transcriptional and post-translational regulation of MITF-M expression and activity"/>
</dbReference>
<dbReference type="SignaLink" id="Q21734"/>
<dbReference type="PRO" id="PR:Q21734"/>
<dbReference type="Proteomes" id="UP000001940">
    <property type="component" value="Chromosome I"/>
</dbReference>
<dbReference type="Bgee" id="WBGene00011352">
    <property type="expression patterns" value="Expressed in germ line (C elegans) and 4 other cell types or tissues"/>
</dbReference>
<dbReference type="ExpressionAtlas" id="Q21734">
    <property type="expression patterns" value="baseline and differential"/>
</dbReference>
<dbReference type="GO" id="GO:0005737">
    <property type="term" value="C:cytoplasm"/>
    <property type="evidence" value="ECO:0000318"/>
    <property type="project" value="GO_Central"/>
</dbReference>
<dbReference type="GO" id="GO:0005654">
    <property type="term" value="C:nucleoplasm"/>
    <property type="evidence" value="ECO:0000318"/>
    <property type="project" value="GO_Central"/>
</dbReference>
<dbReference type="GO" id="GO:0005524">
    <property type="term" value="F:ATP binding"/>
    <property type="evidence" value="ECO:0007669"/>
    <property type="project" value="UniProtKB-KW"/>
</dbReference>
<dbReference type="GO" id="GO:0000287">
    <property type="term" value="F:magnesium ion binding"/>
    <property type="evidence" value="ECO:0007669"/>
    <property type="project" value="InterPro"/>
</dbReference>
<dbReference type="GO" id="GO:0106310">
    <property type="term" value="F:protein serine kinase activity"/>
    <property type="evidence" value="ECO:0007669"/>
    <property type="project" value="RHEA"/>
</dbReference>
<dbReference type="GO" id="GO:0004711">
    <property type="term" value="F:ribosomal protein S6 kinase activity"/>
    <property type="evidence" value="ECO:0000318"/>
    <property type="project" value="GO_Central"/>
</dbReference>
<dbReference type="GO" id="GO:0038202">
    <property type="term" value="P:TORC1 signaling"/>
    <property type="evidence" value="ECO:0000318"/>
    <property type="project" value="GO_Central"/>
</dbReference>
<dbReference type="CDD" id="cd14091">
    <property type="entry name" value="STKc_RSK_C"/>
    <property type="match status" value="1"/>
</dbReference>
<dbReference type="CDD" id="cd05582">
    <property type="entry name" value="STKc_RSK_N"/>
    <property type="match status" value="1"/>
</dbReference>
<dbReference type="FunFam" id="1.10.510.10:FF:000010">
    <property type="entry name" value="Ribosomal protein S6 kinase"/>
    <property type="match status" value="1"/>
</dbReference>
<dbReference type="FunFam" id="3.30.200.20:FF:000013">
    <property type="entry name" value="Ribosomal protein S6 kinase"/>
    <property type="match status" value="1"/>
</dbReference>
<dbReference type="FunFam" id="3.30.200.20:FF:001239">
    <property type="entry name" value="Ribosomal protein S6 kinase"/>
    <property type="match status" value="1"/>
</dbReference>
<dbReference type="FunFam" id="1.10.510.10:FF:001170">
    <property type="entry name" value="Ribosomal protein S6 kinase alpha-1"/>
    <property type="match status" value="1"/>
</dbReference>
<dbReference type="Gene3D" id="3.30.200.20">
    <property type="entry name" value="Phosphorylase Kinase, domain 1"/>
    <property type="match status" value="2"/>
</dbReference>
<dbReference type="Gene3D" id="1.10.510.10">
    <property type="entry name" value="Transferase(Phosphotransferase) domain 1"/>
    <property type="match status" value="2"/>
</dbReference>
<dbReference type="InterPro" id="IPR000961">
    <property type="entry name" value="AGC-kinase_C"/>
</dbReference>
<dbReference type="InterPro" id="IPR011009">
    <property type="entry name" value="Kinase-like_dom_sf"/>
</dbReference>
<dbReference type="InterPro" id="IPR017892">
    <property type="entry name" value="Pkinase_C"/>
</dbReference>
<dbReference type="InterPro" id="IPR000719">
    <property type="entry name" value="Prot_kinase_dom"/>
</dbReference>
<dbReference type="InterPro" id="IPR017441">
    <property type="entry name" value="Protein_kinase_ATP_BS"/>
</dbReference>
<dbReference type="InterPro" id="IPR016239">
    <property type="entry name" value="Ribosomal_S6_kinase_II"/>
</dbReference>
<dbReference type="InterPro" id="IPR041906">
    <property type="entry name" value="RSK_N"/>
</dbReference>
<dbReference type="InterPro" id="IPR008271">
    <property type="entry name" value="Ser/Thr_kinase_AS"/>
</dbReference>
<dbReference type="PANTHER" id="PTHR24351">
    <property type="entry name" value="RIBOSOMAL PROTEIN S6 KINASE"/>
    <property type="match status" value="1"/>
</dbReference>
<dbReference type="Pfam" id="PF00069">
    <property type="entry name" value="Pkinase"/>
    <property type="match status" value="2"/>
</dbReference>
<dbReference type="Pfam" id="PF00433">
    <property type="entry name" value="Pkinase_C"/>
    <property type="match status" value="1"/>
</dbReference>
<dbReference type="PIRSF" id="PIRSF000606">
    <property type="entry name" value="Ribsml_S6_kin_2"/>
    <property type="match status" value="1"/>
</dbReference>
<dbReference type="SMART" id="SM00133">
    <property type="entry name" value="S_TK_X"/>
    <property type="match status" value="1"/>
</dbReference>
<dbReference type="SMART" id="SM00220">
    <property type="entry name" value="S_TKc"/>
    <property type="match status" value="2"/>
</dbReference>
<dbReference type="SUPFAM" id="SSF56112">
    <property type="entry name" value="Protein kinase-like (PK-like)"/>
    <property type="match status" value="2"/>
</dbReference>
<dbReference type="PROSITE" id="PS51285">
    <property type="entry name" value="AGC_KINASE_CTER"/>
    <property type="match status" value="1"/>
</dbReference>
<dbReference type="PROSITE" id="PS00107">
    <property type="entry name" value="PROTEIN_KINASE_ATP"/>
    <property type="match status" value="2"/>
</dbReference>
<dbReference type="PROSITE" id="PS50011">
    <property type="entry name" value="PROTEIN_KINASE_DOM"/>
    <property type="match status" value="2"/>
</dbReference>
<dbReference type="PROSITE" id="PS00108">
    <property type="entry name" value="PROTEIN_KINASE_ST"/>
    <property type="match status" value="1"/>
</dbReference>